<organism>
    <name type="scientific">Methanococcus aeolicus (strain ATCC BAA-1280 / DSM 17508 / OCM 812 / Nankai-3)</name>
    <dbReference type="NCBI Taxonomy" id="419665"/>
    <lineage>
        <taxon>Archaea</taxon>
        <taxon>Methanobacteriati</taxon>
        <taxon>Methanobacteriota</taxon>
        <taxon>Methanomada group</taxon>
        <taxon>Methanococci</taxon>
        <taxon>Methanococcales</taxon>
        <taxon>Methanococcaceae</taxon>
        <taxon>Methanococcus</taxon>
    </lineage>
</organism>
<evidence type="ECO:0000255" key="1">
    <source>
        <dbReference type="HAMAP-Rule" id="MF_01078"/>
    </source>
</evidence>
<reference key="1">
    <citation type="submission" date="2007-06" db="EMBL/GenBank/DDBJ databases">
        <title>Complete sequence of Methanococcus aeolicus Nankai-3.</title>
        <authorList>
            <consortium name="US DOE Joint Genome Institute"/>
            <person name="Copeland A."/>
            <person name="Lucas S."/>
            <person name="Lapidus A."/>
            <person name="Barry K."/>
            <person name="Glavina del Rio T."/>
            <person name="Dalin E."/>
            <person name="Tice H."/>
            <person name="Pitluck S."/>
            <person name="Chain P."/>
            <person name="Malfatti S."/>
            <person name="Shin M."/>
            <person name="Vergez L."/>
            <person name="Schmutz J."/>
            <person name="Larimer F."/>
            <person name="Land M."/>
            <person name="Hauser L."/>
            <person name="Kyrpides N."/>
            <person name="Lykidis A."/>
            <person name="Sieprawska-Lupa M."/>
            <person name="Whitman W.B."/>
            <person name="Richardson P."/>
        </authorList>
    </citation>
    <scope>NUCLEOTIDE SEQUENCE [LARGE SCALE GENOMIC DNA]</scope>
    <source>
        <strain>ATCC BAA-1280 / DSM 17508 / OCM 812 / Nankai-3</strain>
    </source>
</reference>
<proteinExistence type="inferred from homology"/>
<sequence>MQKQRFCIDTTAITDTEVRSSLGVDGISESTKIMLDLIADSRVNLGISCHIPYPSVYDELIGFLKRENCPKETIIKVDTWLVKKTPNRYEIKLPAELLYEYIRDIRERINKGMRIGENAMYESASVSYLSIKGCNSNQNDNTKNTKNVDTNATHKEHTDEVLSKTVKSFRNKYRTALRTGTLDSAPDLDVLLLAKELDAAVVASDEGIEKWAQRLGLRFVKAKDFPFILKEYLNTYGNKI</sequence>
<comment type="function">
    <text evidence="1">RNA-free RNase P that catalyzes the removal of the 5'-leader sequence from pre-tRNA to produce the mature 5'-terminus.</text>
</comment>
<comment type="catalytic activity">
    <reaction evidence="1">
        <text>Endonucleolytic cleavage of RNA, removing 5'-extranucleotides from tRNA precursor.</text>
        <dbReference type="EC" id="3.1.26.5"/>
    </reaction>
</comment>
<comment type="similarity">
    <text evidence="1">Belongs to the HARP family.</text>
</comment>
<gene>
    <name type="ordered locus">Maeo_0950</name>
</gene>
<accession>A6UVK7</accession>
<feature type="chain" id="PRO_1000064798" description="RNA-free ribonuclease P">
    <location>
        <begin position="1"/>
        <end position="240"/>
    </location>
</feature>
<name>RFRNP_META3</name>
<dbReference type="EC" id="3.1.26.5" evidence="1"/>
<dbReference type="EMBL" id="CP000743">
    <property type="protein sequence ID" value="ABR56529.1"/>
    <property type="molecule type" value="Genomic_DNA"/>
</dbReference>
<dbReference type="RefSeq" id="WP_011973661.1">
    <property type="nucleotide sequence ID" value="NC_009635.1"/>
</dbReference>
<dbReference type="SMR" id="A6UVK7"/>
<dbReference type="STRING" id="419665.Maeo_0950"/>
<dbReference type="GeneID" id="5326914"/>
<dbReference type="KEGG" id="mae:Maeo_0950"/>
<dbReference type="eggNOG" id="arCOG00720">
    <property type="taxonomic scope" value="Archaea"/>
</dbReference>
<dbReference type="HOGENOM" id="CLU_109672_0_0_2"/>
<dbReference type="OrthoDB" id="95197at2157"/>
<dbReference type="Proteomes" id="UP000001106">
    <property type="component" value="Chromosome"/>
</dbReference>
<dbReference type="GO" id="GO:0004526">
    <property type="term" value="F:ribonuclease P activity"/>
    <property type="evidence" value="ECO:0007669"/>
    <property type="project" value="UniProtKB-UniRule"/>
</dbReference>
<dbReference type="GO" id="GO:0001682">
    <property type="term" value="P:tRNA 5'-leader removal"/>
    <property type="evidence" value="ECO:0007669"/>
    <property type="project" value="UniProtKB-UniRule"/>
</dbReference>
<dbReference type="CDD" id="cd18691">
    <property type="entry name" value="PIN_VapC-like"/>
    <property type="match status" value="1"/>
</dbReference>
<dbReference type="HAMAP" id="MF_01078">
    <property type="entry name" value="RNA_free_RNase_P"/>
    <property type="match status" value="1"/>
</dbReference>
<dbReference type="InterPro" id="IPR014856">
    <property type="entry name" value="RNA_free_RNase_P"/>
</dbReference>
<dbReference type="NCBIfam" id="NF003340">
    <property type="entry name" value="PRK04358.1-1"/>
    <property type="match status" value="1"/>
</dbReference>
<dbReference type="NCBIfam" id="NF003343">
    <property type="entry name" value="PRK04358.1-4"/>
    <property type="match status" value="1"/>
</dbReference>
<dbReference type="NCBIfam" id="TIGR03875">
    <property type="entry name" value="RNA_lig_partner"/>
    <property type="match status" value="1"/>
</dbReference>
<dbReference type="PANTHER" id="PTHR41173:SF1">
    <property type="entry name" value="RNA-FREE RIBONUCLEASE P"/>
    <property type="match status" value="1"/>
</dbReference>
<dbReference type="PANTHER" id="PTHR41173">
    <property type="entry name" value="UPF0278 PROTEIN TK1425"/>
    <property type="match status" value="1"/>
</dbReference>
<dbReference type="Pfam" id="PF08745">
    <property type="entry name" value="PIN_5"/>
    <property type="match status" value="1"/>
</dbReference>
<protein>
    <recommendedName>
        <fullName evidence="1">RNA-free ribonuclease P</fullName>
        <shortName evidence="1">RNA-free RNase P</shortName>
        <ecNumber evidence="1">3.1.26.5</ecNumber>
    </recommendedName>
    <alternativeName>
        <fullName evidence="1">Protein-only RNase P</fullName>
    </alternativeName>
</protein>
<keyword id="KW-0255">Endonuclease</keyword>
<keyword id="KW-0378">Hydrolase</keyword>
<keyword id="KW-0540">Nuclease</keyword>
<keyword id="KW-0819">tRNA processing</keyword>